<dbReference type="EC" id="4.98.1.1" evidence="1"/>
<dbReference type="EMBL" id="CP000435">
    <property type="protein sequence ID" value="ABI46184.1"/>
    <property type="molecule type" value="Genomic_DNA"/>
</dbReference>
<dbReference type="RefSeq" id="WP_011619915.1">
    <property type="nucleotide sequence ID" value="NC_008319.1"/>
</dbReference>
<dbReference type="SMR" id="Q0I8L9"/>
<dbReference type="STRING" id="64471.sync_2000"/>
<dbReference type="KEGG" id="syg:sync_2000"/>
<dbReference type="eggNOG" id="COG0276">
    <property type="taxonomic scope" value="Bacteria"/>
</dbReference>
<dbReference type="HOGENOM" id="CLU_018884_4_3_3"/>
<dbReference type="OrthoDB" id="9809741at2"/>
<dbReference type="UniPathway" id="UPA00252">
    <property type="reaction ID" value="UER00325"/>
</dbReference>
<dbReference type="Proteomes" id="UP000001961">
    <property type="component" value="Chromosome"/>
</dbReference>
<dbReference type="GO" id="GO:0005737">
    <property type="term" value="C:cytoplasm"/>
    <property type="evidence" value="ECO:0007669"/>
    <property type="project" value="UniProtKB-SubCell"/>
</dbReference>
<dbReference type="GO" id="GO:0004325">
    <property type="term" value="F:ferrochelatase activity"/>
    <property type="evidence" value="ECO:0007669"/>
    <property type="project" value="UniProtKB-UniRule"/>
</dbReference>
<dbReference type="GO" id="GO:0046872">
    <property type="term" value="F:metal ion binding"/>
    <property type="evidence" value="ECO:0007669"/>
    <property type="project" value="UniProtKB-KW"/>
</dbReference>
<dbReference type="GO" id="GO:0006783">
    <property type="term" value="P:heme biosynthetic process"/>
    <property type="evidence" value="ECO:0007669"/>
    <property type="project" value="UniProtKB-UniRule"/>
</dbReference>
<dbReference type="CDD" id="cd00419">
    <property type="entry name" value="Ferrochelatase_C"/>
    <property type="match status" value="1"/>
</dbReference>
<dbReference type="CDD" id="cd03411">
    <property type="entry name" value="Ferrochelatase_N"/>
    <property type="match status" value="1"/>
</dbReference>
<dbReference type="FunFam" id="3.40.50.1400:FF:000006">
    <property type="entry name" value="Ferrochelatase"/>
    <property type="match status" value="1"/>
</dbReference>
<dbReference type="Gene3D" id="3.40.50.1400">
    <property type="match status" value="2"/>
</dbReference>
<dbReference type="HAMAP" id="MF_00323">
    <property type="entry name" value="Ferrochelatase"/>
    <property type="match status" value="1"/>
</dbReference>
<dbReference type="InterPro" id="IPR001015">
    <property type="entry name" value="Ferrochelatase"/>
</dbReference>
<dbReference type="InterPro" id="IPR019772">
    <property type="entry name" value="Ferrochelatase_AS"/>
</dbReference>
<dbReference type="InterPro" id="IPR033644">
    <property type="entry name" value="Ferrochelatase_C"/>
</dbReference>
<dbReference type="InterPro" id="IPR033659">
    <property type="entry name" value="Ferrochelatase_N"/>
</dbReference>
<dbReference type="NCBIfam" id="TIGR00109">
    <property type="entry name" value="hemH"/>
    <property type="match status" value="1"/>
</dbReference>
<dbReference type="PANTHER" id="PTHR11108">
    <property type="entry name" value="FERROCHELATASE"/>
    <property type="match status" value="1"/>
</dbReference>
<dbReference type="PANTHER" id="PTHR11108:SF1">
    <property type="entry name" value="FERROCHELATASE, MITOCHONDRIAL"/>
    <property type="match status" value="1"/>
</dbReference>
<dbReference type="Pfam" id="PF00762">
    <property type="entry name" value="Ferrochelatase"/>
    <property type="match status" value="1"/>
</dbReference>
<dbReference type="SUPFAM" id="SSF53800">
    <property type="entry name" value="Chelatase"/>
    <property type="match status" value="1"/>
</dbReference>
<dbReference type="SUPFAM" id="SSF103511">
    <property type="entry name" value="Chlorophyll a-b binding protein"/>
    <property type="match status" value="1"/>
</dbReference>
<dbReference type="PROSITE" id="PS00534">
    <property type="entry name" value="FERROCHELATASE"/>
    <property type="match status" value="1"/>
</dbReference>
<keyword id="KW-0963">Cytoplasm</keyword>
<keyword id="KW-0350">Heme biosynthesis</keyword>
<keyword id="KW-0408">Iron</keyword>
<keyword id="KW-0456">Lyase</keyword>
<keyword id="KW-0479">Metal-binding</keyword>
<keyword id="KW-0627">Porphyrin biosynthesis</keyword>
<keyword id="KW-1185">Reference proteome</keyword>
<accession>Q0I8L9</accession>
<comment type="function">
    <text evidence="1">Catalyzes the ferrous insertion into protoporphyrin IX.</text>
</comment>
<comment type="catalytic activity">
    <reaction evidence="1">
        <text>heme b + 2 H(+) = protoporphyrin IX + Fe(2+)</text>
        <dbReference type="Rhea" id="RHEA:22584"/>
        <dbReference type="ChEBI" id="CHEBI:15378"/>
        <dbReference type="ChEBI" id="CHEBI:29033"/>
        <dbReference type="ChEBI" id="CHEBI:57306"/>
        <dbReference type="ChEBI" id="CHEBI:60344"/>
        <dbReference type="EC" id="4.98.1.1"/>
    </reaction>
</comment>
<comment type="pathway">
    <text evidence="1">Porphyrin-containing compound metabolism; protoheme biosynthesis; protoheme from protoporphyrin-IX: step 1/1.</text>
</comment>
<comment type="subcellular location">
    <subcellularLocation>
        <location evidence="1">Cytoplasm</location>
    </subcellularLocation>
</comment>
<comment type="similarity">
    <text evidence="1">Belongs to the ferrochelatase family.</text>
</comment>
<feature type="chain" id="PRO_1000019380" description="Ferrochelatase">
    <location>
        <begin position="1"/>
        <end position="391"/>
    </location>
</feature>
<feature type="binding site" evidence="1">
    <location>
        <position position="196"/>
    </location>
    <ligand>
        <name>Fe cation</name>
        <dbReference type="ChEBI" id="CHEBI:24875"/>
    </ligand>
</feature>
<feature type="binding site" evidence="1">
    <location>
        <position position="281"/>
    </location>
    <ligand>
        <name>Fe cation</name>
        <dbReference type="ChEBI" id="CHEBI:24875"/>
    </ligand>
</feature>
<name>HEMH_SYNS3</name>
<reference key="1">
    <citation type="journal article" date="2006" name="Proc. Natl. Acad. Sci. U.S.A.">
        <title>Genome sequence of Synechococcus CC9311: insights into adaptation to a coastal environment.</title>
        <authorList>
            <person name="Palenik B."/>
            <person name="Ren Q."/>
            <person name="Dupont C.L."/>
            <person name="Myers G.S."/>
            <person name="Heidelberg J.F."/>
            <person name="Badger J.H."/>
            <person name="Madupu R."/>
            <person name="Nelson W.C."/>
            <person name="Brinkac L.M."/>
            <person name="Dodson R.J."/>
            <person name="Durkin A.S."/>
            <person name="Daugherty S.C."/>
            <person name="Sullivan S.A."/>
            <person name="Khouri H."/>
            <person name="Mohamoud Y."/>
            <person name="Halpin R."/>
            <person name="Paulsen I.T."/>
        </authorList>
    </citation>
    <scope>NUCLEOTIDE SEQUENCE [LARGE SCALE GENOMIC DNA]</scope>
    <source>
        <strain>CC9311</strain>
    </source>
</reference>
<sequence length="391" mass="43932">MARVGILLLNLGGPERIQDVGPFLYNLFADPEIIRLPNPILQKPLAWLISTLRSSKSQEAYRSIGGGSPLRRITEQQARELQSLLRQRGVDATSYVAMRYWHPFTESAVADIKADGIDEVVVLPLYPHFSISTSGSSFRELQRLRQMDERFEALPLRCIRSWYDHPGYVRSMAELIAEQVRASDDVEHAHIFFSAHGVPKSYVEEAGDPYQQEIEACAALIMAELETIVGHSNPHTLAYQSRVGPVEWLKPYTEEALEELGRAKTQDLVVVPISFVSEHIETLEEIDIEYRELATESGVVNFRRVRALDTYPPFISGLADLVVASLEGPEVNLDQAAELPTTVKLYPQEKWEWGWNNSSEVWNGRLAMIGFSAFLLELISGHGPLHAVGLL</sequence>
<protein>
    <recommendedName>
        <fullName evidence="1">Ferrochelatase</fullName>
        <ecNumber evidence="1">4.98.1.1</ecNumber>
    </recommendedName>
    <alternativeName>
        <fullName evidence="1">Heme synthase</fullName>
    </alternativeName>
    <alternativeName>
        <fullName evidence="1">Protoheme ferro-lyase</fullName>
    </alternativeName>
</protein>
<proteinExistence type="inferred from homology"/>
<gene>
    <name evidence="1" type="primary">hemH</name>
    <name type="ordered locus">sync_2000</name>
</gene>
<evidence type="ECO:0000255" key="1">
    <source>
        <dbReference type="HAMAP-Rule" id="MF_00323"/>
    </source>
</evidence>
<organism>
    <name type="scientific">Synechococcus sp. (strain CC9311)</name>
    <dbReference type="NCBI Taxonomy" id="64471"/>
    <lineage>
        <taxon>Bacteria</taxon>
        <taxon>Bacillati</taxon>
        <taxon>Cyanobacteriota</taxon>
        <taxon>Cyanophyceae</taxon>
        <taxon>Synechococcales</taxon>
        <taxon>Synechococcaceae</taxon>
        <taxon>Synechococcus</taxon>
    </lineage>
</organism>